<feature type="chain" id="PRO_0000172087" description="Putative pre-16S rRNA nuclease">
    <location>
        <begin position="1"/>
        <end position="140"/>
    </location>
</feature>
<protein>
    <recommendedName>
        <fullName evidence="1">Putative pre-16S rRNA nuclease</fullName>
        <ecNumber evidence="1">3.1.-.-</ecNumber>
    </recommendedName>
</protein>
<accession>Q65VZ2</accession>
<reference key="1">
    <citation type="journal article" date="2004" name="Nat. Biotechnol.">
        <title>The genome sequence of the capnophilic rumen bacterium Mannheimia succiniciproducens.</title>
        <authorList>
            <person name="Hong S.H."/>
            <person name="Kim J.S."/>
            <person name="Lee S.Y."/>
            <person name="In Y.H."/>
            <person name="Choi S.S."/>
            <person name="Rih J.-K."/>
            <person name="Kim C.H."/>
            <person name="Jeong H."/>
            <person name="Hur C.G."/>
            <person name="Kim J.J."/>
        </authorList>
    </citation>
    <scope>NUCLEOTIDE SEQUENCE [LARGE SCALE GENOMIC DNA]</scope>
    <source>
        <strain>KCTC 0769BP / MBEL55E</strain>
    </source>
</reference>
<proteinExistence type="inferred from homology"/>
<gene>
    <name type="ordered locus">MS0261</name>
</gene>
<keyword id="KW-0963">Cytoplasm</keyword>
<keyword id="KW-0378">Hydrolase</keyword>
<keyword id="KW-0540">Nuclease</keyword>
<keyword id="KW-0690">Ribosome biogenesis</keyword>
<dbReference type="EC" id="3.1.-.-" evidence="1"/>
<dbReference type="EMBL" id="AE016827">
    <property type="protein sequence ID" value="AAU36868.1"/>
    <property type="molecule type" value="Genomic_DNA"/>
</dbReference>
<dbReference type="SMR" id="Q65VZ2"/>
<dbReference type="STRING" id="221988.MS0261"/>
<dbReference type="KEGG" id="msu:MS0261"/>
<dbReference type="eggNOG" id="COG0816">
    <property type="taxonomic scope" value="Bacteria"/>
</dbReference>
<dbReference type="HOGENOM" id="CLU_098240_3_0_6"/>
<dbReference type="Proteomes" id="UP000000607">
    <property type="component" value="Chromosome"/>
</dbReference>
<dbReference type="GO" id="GO:0005829">
    <property type="term" value="C:cytosol"/>
    <property type="evidence" value="ECO:0007669"/>
    <property type="project" value="TreeGrafter"/>
</dbReference>
<dbReference type="GO" id="GO:0004518">
    <property type="term" value="F:nuclease activity"/>
    <property type="evidence" value="ECO:0007669"/>
    <property type="project" value="UniProtKB-KW"/>
</dbReference>
<dbReference type="GO" id="GO:0000967">
    <property type="term" value="P:rRNA 5'-end processing"/>
    <property type="evidence" value="ECO:0007669"/>
    <property type="project" value="UniProtKB-UniRule"/>
</dbReference>
<dbReference type="CDD" id="cd16964">
    <property type="entry name" value="YqgF"/>
    <property type="match status" value="1"/>
</dbReference>
<dbReference type="FunFam" id="3.30.420.140:FF:000002">
    <property type="entry name" value="Putative pre-16S rRNA nuclease"/>
    <property type="match status" value="1"/>
</dbReference>
<dbReference type="Gene3D" id="3.30.420.140">
    <property type="entry name" value="YqgF/RNase H-like domain"/>
    <property type="match status" value="1"/>
</dbReference>
<dbReference type="HAMAP" id="MF_00651">
    <property type="entry name" value="Nuclease_YqgF"/>
    <property type="match status" value="1"/>
</dbReference>
<dbReference type="InterPro" id="IPR012337">
    <property type="entry name" value="RNaseH-like_sf"/>
</dbReference>
<dbReference type="InterPro" id="IPR005227">
    <property type="entry name" value="YqgF"/>
</dbReference>
<dbReference type="InterPro" id="IPR006641">
    <property type="entry name" value="YqgF/RNaseH-like_dom"/>
</dbReference>
<dbReference type="InterPro" id="IPR037027">
    <property type="entry name" value="YqgF/RNaseH-like_dom_sf"/>
</dbReference>
<dbReference type="NCBIfam" id="TIGR00250">
    <property type="entry name" value="RNAse_H_YqgF"/>
    <property type="match status" value="1"/>
</dbReference>
<dbReference type="PANTHER" id="PTHR33317">
    <property type="entry name" value="POLYNUCLEOTIDYL TRANSFERASE, RIBONUCLEASE H-LIKE SUPERFAMILY PROTEIN"/>
    <property type="match status" value="1"/>
</dbReference>
<dbReference type="PANTHER" id="PTHR33317:SF4">
    <property type="entry name" value="POLYNUCLEOTIDYL TRANSFERASE, RIBONUCLEASE H-LIKE SUPERFAMILY PROTEIN"/>
    <property type="match status" value="1"/>
</dbReference>
<dbReference type="Pfam" id="PF03652">
    <property type="entry name" value="RuvX"/>
    <property type="match status" value="1"/>
</dbReference>
<dbReference type="SMART" id="SM00732">
    <property type="entry name" value="YqgFc"/>
    <property type="match status" value="1"/>
</dbReference>
<dbReference type="SUPFAM" id="SSF53098">
    <property type="entry name" value="Ribonuclease H-like"/>
    <property type="match status" value="1"/>
</dbReference>
<evidence type="ECO:0000255" key="1">
    <source>
        <dbReference type="HAMAP-Rule" id="MF_00651"/>
    </source>
</evidence>
<name>YQGF_MANSM</name>
<sequence length="140" mass="15492">MLMGICALAFDFGTKSIGCAVGQSITGTAQALPAFKAQNGIPNWDSIEKCLKEWKPDILVVGLPLNMDGTEQEFTSRARKFANRLHGRFGVKVELQDERLTTTEARTEIFQRGGYKALNKSKVDGISAALILESWFERHS</sequence>
<comment type="function">
    <text evidence="1">Could be a nuclease involved in processing of the 5'-end of pre-16S rRNA.</text>
</comment>
<comment type="subcellular location">
    <subcellularLocation>
        <location evidence="1">Cytoplasm</location>
    </subcellularLocation>
</comment>
<comment type="similarity">
    <text evidence="1">Belongs to the YqgF nuclease family.</text>
</comment>
<organism>
    <name type="scientific">Mannheimia succiniciproducens (strain KCTC 0769BP / MBEL55E)</name>
    <dbReference type="NCBI Taxonomy" id="221988"/>
    <lineage>
        <taxon>Bacteria</taxon>
        <taxon>Pseudomonadati</taxon>
        <taxon>Pseudomonadota</taxon>
        <taxon>Gammaproteobacteria</taxon>
        <taxon>Pasteurellales</taxon>
        <taxon>Pasteurellaceae</taxon>
        <taxon>Basfia</taxon>
    </lineage>
</organism>